<feature type="chain" id="PRO_0000165741" description="Probable cytosol aminopeptidase">
    <location>
        <begin position="1"/>
        <end position="499"/>
    </location>
</feature>
<feature type="active site" evidence="2">
    <location>
        <position position="275"/>
    </location>
</feature>
<feature type="active site" evidence="2">
    <location>
        <position position="349"/>
    </location>
</feature>
<feature type="binding site" evidence="1">
    <location>
        <position position="263"/>
    </location>
    <ligand>
        <name>Mn(2+)</name>
        <dbReference type="ChEBI" id="CHEBI:29035"/>
        <label>2</label>
    </ligand>
</feature>
<feature type="binding site" evidence="1">
    <location>
        <position position="268"/>
    </location>
    <ligand>
        <name>Mn(2+)</name>
        <dbReference type="ChEBI" id="CHEBI:29035"/>
        <label>1</label>
    </ligand>
</feature>
<feature type="binding site" evidence="1">
    <location>
        <position position="268"/>
    </location>
    <ligand>
        <name>Mn(2+)</name>
        <dbReference type="ChEBI" id="CHEBI:29035"/>
        <label>2</label>
    </ligand>
</feature>
<feature type="binding site" evidence="1">
    <location>
        <position position="286"/>
    </location>
    <ligand>
        <name>Mn(2+)</name>
        <dbReference type="ChEBI" id="CHEBI:29035"/>
        <label>2</label>
    </ligand>
</feature>
<feature type="binding site" evidence="1">
    <location>
        <position position="345"/>
    </location>
    <ligand>
        <name>Mn(2+)</name>
        <dbReference type="ChEBI" id="CHEBI:29035"/>
        <label>1</label>
    </ligand>
</feature>
<feature type="binding site" evidence="1">
    <location>
        <position position="347"/>
    </location>
    <ligand>
        <name>Mn(2+)</name>
        <dbReference type="ChEBI" id="CHEBI:29035"/>
        <label>1</label>
    </ligand>
</feature>
<feature type="binding site" evidence="1">
    <location>
        <position position="347"/>
    </location>
    <ligand>
        <name>Mn(2+)</name>
        <dbReference type="ChEBI" id="CHEBI:29035"/>
        <label>2</label>
    </ligand>
</feature>
<feature type="strand" evidence="4">
    <location>
        <begin position="4"/>
        <end position="7"/>
    </location>
</feature>
<feature type="strand" evidence="4">
    <location>
        <begin position="17"/>
        <end position="26"/>
    </location>
</feature>
<feature type="strand" evidence="4">
    <location>
        <begin position="29"/>
        <end position="34"/>
    </location>
</feature>
<feature type="helix" evidence="4">
    <location>
        <begin position="38"/>
        <end position="44"/>
    </location>
</feature>
<feature type="helix" evidence="4">
    <location>
        <begin position="45"/>
        <end position="50"/>
    </location>
</feature>
<feature type="strand" evidence="4">
    <location>
        <begin position="58"/>
        <end position="62"/>
    </location>
</feature>
<feature type="strand" evidence="4">
    <location>
        <begin position="68"/>
        <end position="76"/>
    </location>
</feature>
<feature type="helix" evidence="4">
    <location>
        <begin position="80"/>
        <end position="82"/>
    </location>
</feature>
<feature type="helix" evidence="4">
    <location>
        <begin position="85"/>
        <end position="101"/>
    </location>
</feature>
<feature type="strand" evidence="4">
    <location>
        <begin position="106"/>
        <end position="110"/>
    </location>
</feature>
<feature type="strand" evidence="4">
    <location>
        <begin position="117"/>
        <end position="119"/>
    </location>
</feature>
<feature type="helix" evidence="4">
    <location>
        <begin position="121"/>
        <end position="135"/>
    </location>
</feature>
<feature type="strand" evidence="4">
    <location>
        <begin position="154"/>
        <end position="158"/>
    </location>
</feature>
<feature type="helix" evidence="4">
    <location>
        <begin position="162"/>
        <end position="187"/>
    </location>
</feature>
<feature type="turn" evidence="4">
    <location>
        <begin position="190"/>
        <end position="192"/>
    </location>
</feature>
<feature type="helix" evidence="4">
    <location>
        <begin position="195"/>
        <end position="208"/>
    </location>
</feature>
<feature type="strand" evidence="4">
    <location>
        <begin position="212"/>
        <end position="217"/>
    </location>
</feature>
<feature type="helix" evidence="4">
    <location>
        <begin position="219"/>
        <end position="224"/>
    </location>
</feature>
<feature type="helix" evidence="4">
    <location>
        <begin position="228"/>
        <end position="234"/>
    </location>
</feature>
<feature type="strand" evidence="4">
    <location>
        <begin position="242"/>
        <end position="250"/>
    </location>
</feature>
<feature type="strand" evidence="4">
    <location>
        <begin position="257"/>
        <end position="262"/>
    </location>
</feature>
<feature type="strand" evidence="4">
    <location>
        <begin position="264"/>
        <end position="268"/>
    </location>
</feature>
<feature type="helix" evidence="4">
    <location>
        <begin position="277"/>
        <end position="280"/>
    </location>
</feature>
<feature type="helix" evidence="4">
    <location>
        <begin position="283"/>
        <end position="287"/>
    </location>
</feature>
<feature type="helix" evidence="4">
    <location>
        <begin position="288"/>
        <end position="303"/>
    </location>
</feature>
<feature type="strand" evidence="4">
    <location>
        <begin position="306"/>
        <end position="318"/>
    </location>
</feature>
<feature type="strand" evidence="4">
    <location>
        <begin position="330"/>
        <end position="332"/>
    </location>
</feature>
<feature type="strand" evidence="4">
    <location>
        <begin position="338"/>
        <end position="340"/>
    </location>
</feature>
<feature type="helix" evidence="4">
    <location>
        <begin position="348"/>
        <end position="362"/>
    </location>
</feature>
<feature type="strand" evidence="4">
    <location>
        <begin position="366"/>
        <end position="372"/>
    </location>
</feature>
<feature type="helix" evidence="4">
    <location>
        <begin position="376"/>
        <end position="382"/>
    </location>
</feature>
<feature type="turn" evidence="4">
    <location>
        <begin position="383"/>
        <end position="385"/>
    </location>
</feature>
<feature type="strand" evidence="4">
    <location>
        <begin position="386"/>
        <end position="392"/>
    </location>
</feature>
<feature type="helix" evidence="4">
    <location>
        <begin position="394"/>
        <end position="407"/>
    </location>
</feature>
<feature type="strand" evidence="4">
    <location>
        <begin position="411"/>
        <end position="413"/>
    </location>
</feature>
<feature type="helix" evidence="4">
    <location>
        <begin position="418"/>
        <end position="424"/>
    </location>
</feature>
<feature type="strand" evidence="4">
    <location>
        <begin position="427"/>
        <end position="434"/>
    </location>
</feature>
<feature type="strand" evidence="4">
    <location>
        <begin position="436"/>
        <end position="438"/>
    </location>
</feature>
<feature type="helix" evidence="4">
    <location>
        <begin position="440"/>
        <end position="450"/>
    </location>
</feature>
<feature type="turn" evidence="4">
    <location>
        <begin position="451"/>
        <end position="454"/>
    </location>
</feature>
<feature type="strand" evidence="4">
    <location>
        <begin position="458"/>
        <end position="463"/>
    </location>
</feature>
<feature type="turn" evidence="4">
    <location>
        <begin position="465"/>
        <end position="467"/>
    </location>
</feature>
<feature type="strand" evidence="4">
    <location>
        <begin position="468"/>
        <end position="472"/>
    </location>
</feature>
<feature type="strand" evidence="4">
    <location>
        <begin position="479"/>
        <end position="481"/>
    </location>
</feature>
<feature type="helix" evidence="4">
    <location>
        <begin position="486"/>
        <end position="496"/>
    </location>
</feature>
<protein>
    <recommendedName>
        <fullName>Probable cytosol aminopeptidase</fullName>
        <ecNumber>3.4.11.1</ecNumber>
    </recommendedName>
    <alternativeName>
        <fullName>Leucine aminopeptidase</fullName>
        <shortName>LAP</shortName>
        <ecNumber>3.4.11.10</ecNumber>
    </alternativeName>
    <alternativeName>
        <fullName>Leucyl aminopeptidase</fullName>
    </alternativeName>
</protein>
<gene>
    <name type="primary">pepA</name>
    <name type="ordered locus">CT_045</name>
</gene>
<dbReference type="EC" id="3.4.11.1"/>
<dbReference type="EC" id="3.4.11.10"/>
<dbReference type="EMBL" id="AE001273">
    <property type="protein sequence ID" value="AAC67636.1"/>
    <property type="molecule type" value="Genomic_DNA"/>
</dbReference>
<dbReference type="PIR" id="C71563">
    <property type="entry name" value="C71563"/>
</dbReference>
<dbReference type="RefSeq" id="NP_219548.1">
    <property type="nucleotide sequence ID" value="NC_000117.1"/>
</dbReference>
<dbReference type="RefSeq" id="WP_009871393.1">
    <property type="nucleotide sequence ID" value="NC_000117.1"/>
</dbReference>
<dbReference type="PDB" id="6OME">
    <property type="method" value="X-ray"/>
    <property type="resolution" value="1.95 A"/>
    <property type="chains" value="A=2-499"/>
</dbReference>
<dbReference type="PDBsum" id="6OME"/>
<dbReference type="SMR" id="O84049"/>
<dbReference type="FunCoup" id="O84049">
    <property type="interactions" value="181"/>
</dbReference>
<dbReference type="STRING" id="272561.CT_045"/>
<dbReference type="EnsemblBacteria" id="AAC67636">
    <property type="protein sequence ID" value="AAC67636"/>
    <property type="gene ID" value="CT_045"/>
</dbReference>
<dbReference type="GeneID" id="884033"/>
<dbReference type="KEGG" id="ctr:CT_045"/>
<dbReference type="PATRIC" id="fig|272561.5.peg.51"/>
<dbReference type="HOGENOM" id="CLU_013734_2_2_0"/>
<dbReference type="InParanoid" id="O84049"/>
<dbReference type="OrthoDB" id="9809354at2"/>
<dbReference type="Proteomes" id="UP000000431">
    <property type="component" value="Chromosome"/>
</dbReference>
<dbReference type="GO" id="GO:0005737">
    <property type="term" value="C:cytoplasm"/>
    <property type="evidence" value="ECO:0000318"/>
    <property type="project" value="GO_Central"/>
</dbReference>
<dbReference type="GO" id="GO:0030145">
    <property type="term" value="F:manganese ion binding"/>
    <property type="evidence" value="ECO:0007669"/>
    <property type="project" value="UniProtKB-UniRule"/>
</dbReference>
<dbReference type="GO" id="GO:0070006">
    <property type="term" value="F:metalloaminopeptidase activity"/>
    <property type="evidence" value="ECO:0007669"/>
    <property type="project" value="InterPro"/>
</dbReference>
<dbReference type="GO" id="GO:0008233">
    <property type="term" value="F:peptidase activity"/>
    <property type="evidence" value="ECO:0000318"/>
    <property type="project" value="GO_Central"/>
</dbReference>
<dbReference type="GO" id="GO:0006508">
    <property type="term" value="P:proteolysis"/>
    <property type="evidence" value="ECO:0000318"/>
    <property type="project" value="GO_Central"/>
</dbReference>
<dbReference type="CDD" id="cd00433">
    <property type="entry name" value="Peptidase_M17"/>
    <property type="match status" value="1"/>
</dbReference>
<dbReference type="Gene3D" id="3.40.220.10">
    <property type="entry name" value="Leucine Aminopeptidase, subunit E, domain 1"/>
    <property type="match status" value="1"/>
</dbReference>
<dbReference type="Gene3D" id="3.40.630.10">
    <property type="entry name" value="Zn peptidases"/>
    <property type="match status" value="1"/>
</dbReference>
<dbReference type="HAMAP" id="MF_00181">
    <property type="entry name" value="Cytosol_peptidase_M17"/>
    <property type="match status" value="1"/>
</dbReference>
<dbReference type="InterPro" id="IPR011356">
    <property type="entry name" value="Leucine_aapep/pepB"/>
</dbReference>
<dbReference type="InterPro" id="IPR043472">
    <property type="entry name" value="Macro_dom-like"/>
</dbReference>
<dbReference type="InterPro" id="IPR000819">
    <property type="entry name" value="Peptidase_M17_C"/>
</dbReference>
<dbReference type="InterPro" id="IPR023042">
    <property type="entry name" value="Peptidase_M17_leu_NH2_pept"/>
</dbReference>
<dbReference type="InterPro" id="IPR008283">
    <property type="entry name" value="Peptidase_M17_N"/>
</dbReference>
<dbReference type="NCBIfam" id="NF002074">
    <property type="entry name" value="PRK00913.1-4"/>
    <property type="match status" value="1"/>
</dbReference>
<dbReference type="NCBIfam" id="NF002078">
    <property type="entry name" value="PRK00913.2-5"/>
    <property type="match status" value="1"/>
</dbReference>
<dbReference type="NCBIfam" id="NF002083">
    <property type="entry name" value="PRK00913.3-5"/>
    <property type="match status" value="1"/>
</dbReference>
<dbReference type="PANTHER" id="PTHR11963:SF23">
    <property type="entry name" value="CYTOSOL AMINOPEPTIDASE"/>
    <property type="match status" value="1"/>
</dbReference>
<dbReference type="PANTHER" id="PTHR11963">
    <property type="entry name" value="LEUCINE AMINOPEPTIDASE-RELATED"/>
    <property type="match status" value="1"/>
</dbReference>
<dbReference type="Pfam" id="PF00883">
    <property type="entry name" value="Peptidase_M17"/>
    <property type="match status" value="1"/>
</dbReference>
<dbReference type="Pfam" id="PF02789">
    <property type="entry name" value="Peptidase_M17_N"/>
    <property type="match status" value="1"/>
</dbReference>
<dbReference type="PRINTS" id="PR00481">
    <property type="entry name" value="LAMNOPPTDASE"/>
</dbReference>
<dbReference type="SUPFAM" id="SSF52949">
    <property type="entry name" value="Macro domain-like"/>
    <property type="match status" value="1"/>
</dbReference>
<dbReference type="SUPFAM" id="SSF53187">
    <property type="entry name" value="Zn-dependent exopeptidases"/>
    <property type="match status" value="1"/>
</dbReference>
<dbReference type="PROSITE" id="PS00631">
    <property type="entry name" value="CYTOSOL_AP"/>
    <property type="match status" value="1"/>
</dbReference>
<evidence type="ECO:0000250" key="1"/>
<evidence type="ECO:0000255" key="2"/>
<evidence type="ECO:0000305" key="3"/>
<evidence type="ECO:0007829" key="4">
    <source>
        <dbReference type="PDB" id="6OME"/>
    </source>
</evidence>
<accession>O84049</accession>
<comment type="function">
    <text evidence="1">Presumably involved in the processing and regular turnover of intracellular proteins. Catalyzes the removal of unsubstituted N-terminal amino acids from various peptides (By similarity).</text>
</comment>
<comment type="catalytic activity">
    <reaction>
        <text>Release of an N-terminal amino acid, Xaa-|-Yaa-, in which Xaa is preferably Leu, but may be other amino acids including Pro although not Arg or Lys, and Yaa may be Pro. Amino acid amides and methyl esters are also readily hydrolyzed, but rates on arylamides are exceedingly low.</text>
        <dbReference type="EC" id="3.4.11.1"/>
    </reaction>
</comment>
<comment type="catalytic activity">
    <reaction>
        <text>Release of an N-terminal amino acid, preferentially leucine, but not glutamic or aspartic acids.</text>
        <dbReference type="EC" id="3.4.11.10"/>
    </reaction>
</comment>
<comment type="cofactor">
    <cofactor evidence="1">
        <name>Mn(2+)</name>
        <dbReference type="ChEBI" id="CHEBI:29035"/>
    </cofactor>
    <text evidence="1">Binds 2 manganese ions per subunit.</text>
</comment>
<comment type="subcellular location">
    <subcellularLocation>
        <location evidence="1">Cytoplasm</location>
    </subcellularLocation>
</comment>
<comment type="similarity">
    <text evidence="3">Belongs to the peptidase M17 family.</text>
</comment>
<proteinExistence type="evidence at protein level"/>
<sequence length="499" mass="54210">MVLLYSQASWDKRSKADALVLPFWMKNSKAQEAAVVDEDYKLVYQNALSNFSGKKGETAFLFGNDHTKEQKIVLLGLGKSEEVSGTTVLEAYAQATTVLRKAKCKTVNILLPTISQLRFSVEEFLTNLAAGVLSLNYNYPTYHKVDTSLPFLEKVTVMGIVSKVGDKIFRKEESLFEGVYLTRDLVNTNADEVTPEKLAAVAKDLAGEFASLDVKILDRKAILKEKMGLLAAVAKGAAVEPRFIVLDYQGKPKSKDRTVLIGKGVTFDSGGLDLKPGKAMITMKEDMAGAATVLGIFSALASLELPINVTGIIPATENAIGSAAYKMGDVYVGMTGLSVEIGSTDAEGRLILADAISYALKYCNPTRIIDFATLTGAMVVSLGESVAGFFANNDVLARDLAEASSETGEALWRMPLVEKYDQALHSDIADMKNIGSNRAGSITAALFLQRFLEDNPVAWAHLDIAGTAYHEKEELPYPKYATGFGVRCLIHYMEKFLSK</sequence>
<reference key="1">
    <citation type="journal article" date="1998" name="Science">
        <title>Genome sequence of an obligate intracellular pathogen of humans: Chlamydia trachomatis.</title>
        <authorList>
            <person name="Stephens R.S."/>
            <person name="Kalman S."/>
            <person name="Lammel C.J."/>
            <person name="Fan J."/>
            <person name="Marathe R."/>
            <person name="Aravind L."/>
            <person name="Mitchell W.P."/>
            <person name="Olinger L."/>
            <person name="Tatusov R.L."/>
            <person name="Zhao Q."/>
            <person name="Koonin E.V."/>
            <person name="Davis R.W."/>
        </authorList>
    </citation>
    <scope>NUCLEOTIDE SEQUENCE [LARGE SCALE GENOMIC DNA]</scope>
    <source>
        <strain>ATCC VR-885 / DSM 19411 / UW-3/Cx</strain>
    </source>
</reference>
<keyword id="KW-0002">3D-structure</keyword>
<keyword id="KW-0031">Aminopeptidase</keyword>
<keyword id="KW-0963">Cytoplasm</keyword>
<keyword id="KW-0378">Hydrolase</keyword>
<keyword id="KW-0464">Manganese</keyword>
<keyword id="KW-0479">Metal-binding</keyword>
<keyword id="KW-0645">Protease</keyword>
<keyword id="KW-1185">Reference proteome</keyword>
<name>AMPA_CHLTR</name>
<organism>
    <name type="scientific">Chlamydia trachomatis serovar D (strain ATCC VR-885 / DSM 19411 / UW-3/Cx)</name>
    <dbReference type="NCBI Taxonomy" id="272561"/>
    <lineage>
        <taxon>Bacteria</taxon>
        <taxon>Pseudomonadati</taxon>
        <taxon>Chlamydiota</taxon>
        <taxon>Chlamydiia</taxon>
        <taxon>Chlamydiales</taxon>
        <taxon>Chlamydiaceae</taxon>
        <taxon>Chlamydia/Chlamydophila group</taxon>
        <taxon>Chlamydia</taxon>
    </lineage>
</organism>